<evidence type="ECO:0000250" key="1"/>
<evidence type="ECO:0000250" key="2">
    <source>
        <dbReference type="UniProtKB" id="P02470"/>
    </source>
</evidence>
<evidence type="ECO:0000250" key="3">
    <source>
        <dbReference type="UniProtKB" id="P02474"/>
    </source>
</evidence>
<evidence type="ECO:0000250" key="4">
    <source>
        <dbReference type="UniProtKB" id="P02489"/>
    </source>
</evidence>
<evidence type="ECO:0000255" key="5">
    <source>
        <dbReference type="PROSITE-ProRule" id="PRU00285"/>
    </source>
</evidence>
<evidence type="ECO:0000256" key="6">
    <source>
        <dbReference type="SAM" id="MobiDB-lite"/>
    </source>
</evidence>
<evidence type="ECO:0000305" key="7"/>
<reference key="1">
    <citation type="book" date="1980" name="Protides of the biological fluids, Proc. 28th colloquium">
        <title>Trends in the molecular evolution of alpha-crystallin.</title>
        <editorList>
            <person name="Peeters H."/>
        </editorList>
        <authorList>
            <person name="de Jong W.W."/>
            <person name="Zweers A."/>
            <person name="Goodman M."/>
        </authorList>
    </citation>
    <scope>PARTIAL PROTEIN SEQUENCE</scope>
</reference>
<comment type="function">
    <text evidence="4">Contributes to the transparency and refractive index of the lens. Acts as a chaperone, preventing aggregation of various proteins under a wide range of stress conditions. Required for the correct formation of lens intermediate filaments as part of a complex composed of BFSP1, BFSP2 and CRYAA.</text>
</comment>
<comment type="subunit">
    <text evidence="2 4">Heteromer composed of three CRYAA and one CRYAB subunits. Inter-subunit bridging via zinc ions enhances stability, which is crucial as there is no protein turn over in the lens. Can also form homodimers and homotetramers (dimers of dimers) which serve as the building blocks of homooligomers (By similarity). Within homooligomers, the zinc-binding motif is created from residues of 3 different molecules. His-100 and Glu-102 from one molecule are ligands of the zinc ion, and His-107 and His-154 residues from additional molecules complete the site with tetrahedral coordination geometry (By similarity). Part of a complex required for lens intermediate filament formation composed of BFSP1, BFSP2 and CRYAA (By similarity).</text>
</comment>
<comment type="subcellular location">
    <subcellularLocation>
        <location evidence="4">Cytoplasm</location>
    </subcellularLocation>
    <subcellularLocation>
        <location evidence="4">Nucleus</location>
    </subcellularLocation>
    <text evidence="4">Translocates to the nucleus during heat shock and resides in sub-nuclear structures known as SC35 speckles or nuclear splicing speckles.</text>
</comment>
<comment type="PTM">
    <text evidence="4">Acetylation at Lys-70 may increase chaperone activity.</text>
</comment>
<comment type="PTM">
    <text evidence="4">Undergoes age-dependent proteolytical cleavage at the C-terminus.</text>
</comment>
<comment type="similarity">
    <text evidence="5">Belongs to the small heat shock protein (HSP20) family.</text>
</comment>
<sequence>MDIAIQHPWFKRTLGPFYPSRLFDQFFGEGLFEYDLLPFLSSTISPYYRQSLFRTVLDSGISEVRSDRDKFVIFLDVKHFSPEDLTVKVQEDFVEIHGKHNERQDDHGYISREFHRRYRLPSNVDQTALSCSLSADGMLTFSGPKVPSGLDAGHSERAIPVSREEKPSSAPSS</sequence>
<protein>
    <recommendedName>
        <fullName>Alpha-crystallin A chain</fullName>
    </recommendedName>
</protein>
<keyword id="KW-0007">Acetylation</keyword>
<keyword id="KW-0143">Chaperone</keyword>
<keyword id="KW-0963">Cytoplasm</keyword>
<keyword id="KW-0903">Direct protein sequencing</keyword>
<keyword id="KW-0273">Eye lens protein</keyword>
<keyword id="KW-0325">Glycoprotein</keyword>
<keyword id="KW-0479">Metal-binding</keyword>
<keyword id="KW-0488">Methylation</keyword>
<keyword id="KW-0539">Nucleus</keyword>
<keyword id="KW-0597">Phosphoprotein</keyword>
<keyword id="KW-0862">Zinc</keyword>
<organism>
    <name type="scientific">Tapirus indicus</name>
    <name type="common">Asiatic tapir</name>
    <name type="synonym">Malayan tapir</name>
    <dbReference type="NCBI Taxonomy" id="9802"/>
    <lineage>
        <taxon>Eukaryota</taxon>
        <taxon>Metazoa</taxon>
        <taxon>Chordata</taxon>
        <taxon>Craniata</taxon>
        <taxon>Vertebrata</taxon>
        <taxon>Euteleostomi</taxon>
        <taxon>Mammalia</taxon>
        <taxon>Eutheria</taxon>
        <taxon>Laurasiatheria</taxon>
        <taxon>Perissodactyla</taxon>
        <taxon>Tapiridae</taxon>
        <taxon>Tapirus</taxon>
    </lineage>
</organism>
<accession>P02476</accession>
<proteinExistence type="evidence at protein level"/>
<gene>
    <name type="primary">CRYAA</name>
</gene>
<name>CRYAA_TAPIN</name>
<dbReference type="PIR" id="A02878">
    <property type="entry name" value="CYTPAA"/>
</dbReference>
<dbReference type="BMRB" id="P02476"/>
<dbReference type="SMR" id="P02476"/>
<dbReference type="GlyCosmos" id="P02476">
    <property type="glycosylation" value="1 site, No reported glycans"/>
</dbReference>
<dbReference type="GO" id="GO:0005737">
    <property type="term" value="C:cytoplasm"/>
    <property type="evidence" value="ECO:0000250"/>
    <property type="project" value="UniProtKB"/>
</dbReference>
<dbReference type="GO" id="GO:0005634">
    <property type="term" value="C:nucleus"/>
    <property type="evidence" value="ECO:0000250"/>
    <property type="project" value="UniProtKB"/>
</dbReference>
<dbReference type="GO" id="GO:0046872">
    <property type="term" value="F:metal ion binding"/>
    <property type="evidence" value="ECO:0007669"/>
    <property type="project" value="UniProtKB-KW"/>
</dbReference>
<dbReference type="GO" id="GO:0005212">
    <property type="term" value="F:structural constituent of eye lens"/>
    <property type="evidence" value="ECO:0007669"/>
    <property type="project" value="UniProtKB-KW"/>
</dbReference>
<dbReference type="GO" id="GO:0051082">
    <property type="term" value="F:unfolded protein binding"/>
    <property type="evidence" value="ECO:0007669"/>
    <property type="project" value="TreeGrafter"/>
</dbReference>
<dbReference type="GO" id="GO:0002088">
    <property type="term" value="P:lens development in camera-type eye"/>
    <property type="evidence" value="ECO:0007669"/>
    <property type="project" value="TreeGrafter"/>
</dbReference>
<dbReference type="GO" id="GO:0043066">
    <property type="term" value="P:negative regulation of apoptotic process"/>
    <property type="evidence" value="ECO:0007669"/>
    <property type="project" value="TreeGrafter"/>
</dbReference>
<dbReference type="GO" id="GO:0042026">
    <property type="term" value="P:protein refolding"/>
    <property type="evidence" value="ECO:0007669"/>
    <property type="project" value="TreeGrafter"/>
</dbReference>
<dbReference type="GO" id="GO:0009408">
    <property type="term" value="P:response to heat"/>
    <property type="evidence" value="ECO:0007669"/>
    <property type="project" value="TreeGrafter"/>
</dbReference>
<dbReference type="FunFam" id="2.60.40.790:FF:000008">
    <property type="entry name" value="Alpha-crystallin A chain"/>
    <property type="match status" value="1"/>
</dbReference>
<dbReference type="Gene3D" id="2.60.40.790">
    <property type="match status" value="1"/>
</dbReference>
<dbReference type="InterPro" id="IPR002068">
    <property type="entry name" value="A-crystallin/Hsp20_dom"/>
</dbReference>
<dbReference type="InterPro" id="IPR055269">
    <property type="entry name" value="Alpha-crystallin/HSP_16"/>
</dbReference>
<dbReference type="InterPro" id="IPR001436">
    <property type="entry name" value="Alpha-crystallin/sHSP_animal"/>
</dbReference>
<dbReference type="InterPro" id="IPR003090">
    <property type="entry name" value="Alpha-crystallin_N"/>
</dbReference>
<dbReference type="InterPro" id="IPR008978">
    <property type="entry name" value="HSP20-like_chaperone"/>
</dbReference>
<dbReference type="PANTHER" id="PTHR45640:SF14">
    <property type="entry name" value="ALPHA-CRYSTALLIN A CHAIN"/>
    <property type="match status" value="1"/>
</dbReference>
<dbReference type="PANTHER" id="PTHR45640">
    <property type="entry name" value="HEAT SHOCK PROTEIN HSP-12.2-RELATED"/>
    <property type="match status" value="1"/>
</dbReference>
<dbReference type="Pfam" id="PF00525">
    <property type="entry name" value="Crystallin"/>
    <property type="match status" value="1"/>
</dbReference>
<dbReference type="Pfam" id="PF00011">
    <property type="entry name" value="HSP20"/>
    <property type="match status" value="1"/>
</dbReference>
<dbReference type="PIRSF" id="PIRSF036514">
    <property type="entry name" value="Sm_HSP_B1"/>
    <property type="match status" value="1"/>
</dbReference>
<dbReference type="PRINTS" id="PR00299">
    <property type="entry name" value="ACRYSTALLIN"/>
</dbReference>
<dbReference type="SUPFAM" id="SSF49764">
    <property type="entry name" value="HSP20-like chaperones"/>
    <property type="match status" value="1"/>
</dbReference>
<dbReference type="PROSITE" id="PS01031">
    <property type="entry name" value="SHSP"/>
    <property type="match status" value="1"/>
</dbReference>
<feature type="chain" id="PRO_0000125887" description="Alpha-crystallin A chain">
    <location>
        <begin position="1"/>
        <end position="173"/>
    </location>
</feature>
<feature type="domain" description="sHSP" evidence="5">
    <location>
        <begin position="52"/>
        <end position="162"/>
    </location>
</feature>
<feature type="region of interest" description="Required for complex formation with BFSP1 and BFSP2" evidence="4">
    <location>
        <begin position="1"/>
        <end position="63"/>
    </location>
</feature>
<feature type="region of interest" description="Disordered" evidence="6">
    <location>
        <begin position="144"/>
        <end position="173"/>
    </location>
</feature>
<feature type="compositionally biased region" description="Basic and acidic residues" evidence="6">
    <location>
        <begin position="153"/>
        <end position="167"/>
    </location>
</feature>
<feature type="binding site" evidence="2">
    <location>
        <position position="100"/>
    </location>
    <ligand>
        <name>Zn(2+)</name>
        <dbReference type="ChEBI" id="CHEBI:29105"/>
        <label>1</label>
    </ligand>
</feature>
<feature type="binding site" evidence="2">
    <location>
        <position position="102"/>
    </location>
    <ligand>
        <name>Zn(2+)</name>
        <dbReference type="ChEBI" id="CHEBI:29105"/>
        <label>1</label>
    </ligand>
</feature>
<feature type="binding site" evidence="2">
    <location>
        <position position="107"/>
    </location>
    <ligand>
        <name>Zn(2+)</name>
        <dbReference type="ChEBI" id="CHEBI:29105"/>
        <label>2</label>
    </ligand>
</feature>
<feature type="binding site" evidence="2">
    <location>
        <position position="154"/>
    </location>
    <ligand>
        <name>Zn(2+)</name>
        <dbReference type="ChEBI" id="CHEBI:29105"/>
        <label>3</label>
    </ligand>
</feature>
<feature type="modified residue" description="N-acetylmethionine" evidence="3 7">
    <location>
        <position position="1"/>
    </location>
</feature>
<feature type="modified residue" description="Deamidated glutamine; partial" evidence="1">
    <location>
        <position position="6"/>
    </location>
</feature>
<feature type="modified residue" description="Phosphoserine" evidence="4">
    <location>
        <position position="45"/>
    </location>
</feature>
<feature type="modified residue" description="Deamidated glutamine; partial" evidence="1">
    <location>
        <position position="50"/>
    </location>
</feature>
<feature type="modified residue" description="N6-acetyllysine" evidence="4">
    <location>
        <position position="70"/>
    </location>
</feature>
<feature type="modified residue" description="Deamidated glutamine; partial" evidence="1">
    <location>
        <position position="90"/>
    </location>
</feature>
<feature type="modified residue" description="N6-acetyllysine" evidence="4">
    <location>
        <position position="99"/>
    </location>
</feature>
<feature type="modified residue" description="Deamidated asparagine; partial" evidence="1">
    <location>
        <position position="101"/>
    </location>
</feature>
<feature type="modified residue" description="Phosphoserine" evidence="2">
    <location>
        <position position="122"/>
    </location>
</feature>
<feature type="modified residue" description="Deamidated asparagine; partial" evidence="1">
    <location>
        <position position="123"/>
    </location>
</feature>
<feature type="glycosylation site" description="O-linked (GlcNAc) serine" evidence="1">
    <location>
        <position position="162"/>
    </location>
</feature>